<evidence type="ECO:0000255" key="1">
    <source>
        <dbReference type="HAMAP-Rule" id="MF_00503"/>
    </source>
</evidence>
<evidence type="ECO:0000305" key="2"/>
<gene>
    <name evidence="1" type="primary">rplI</name>
    <name type="ordered locus">SDY_4372</name>
</gene>
<feature type="chain" id="PRO_0000236586" description="Large ribosomal subunit protein bL9">
    <location>
        <begin position="1"/>
        <end position="149"/>
    </location>
</feature>
<feature type="modified residue" description="N6-acetyllysine" evidence="1">
    <location>
        <position position="89"/>
    </location>
</feature>
<comment type="function">
    <text evidence="1">Binds to the 23S rRNA.</text>
</comment>
<comment type="similarity">
    <text evidence="1">Belongs to the bacterial ribosomal protein bL9 family.</text>
</comment>
<accession>Q328J6</accession>
<sequence>MQVILLDKVANLGSLGDQVNVKAGYARNFLVPQGKAVPATKKNIEFFEARRAELEAKLAEVLAAANARAEKIDALETVTIASKAGDEGKLFGSIGTRDIADAVTAAGVEVAKSEVRLPNGVLRTTGEHEVSFQVHSEVFAKVIVNVVAE</sequence>
<organism>
    <name type="scientific">Shigella dysenteriae serotype 1 (strain Sd197)</name>
    <dbReference type="NCBI Taxonomy" id="300267"/>
    <lineage>
        <taxon>Bacteria</taxon>
        <taxon>Pseudomonadati</taxon>
        <taxon>Pseudomonadota</taxon>
        <taxon>Gammaproteobacteria</taxon>
        <taxon>Enterobacterales</taxon>
        <taxon>Enterobacteriaceae</taxon>
        <taxon>Shigella</taxon>
    </lineage>
</organism>
<keyword id="KW-0002">3D-structure</keyword>
<keyword id="KW-0007">Acetylation</keyword>
<keyword id="KW-1185">Reference proteome</keyword>
<keyword id="KW-0687">Ribonucleoprotein</keyword>
<keyword id="KW-0689">Ribosomal protein</keyword>
<keyword id="KW-0694">RNA-binding</keyword>
<keyword id="KW-0699">rRNA-binding</keyword>
<proteinExistence type="evidence at protein level"/>
<protein>
    <recommendedName>
        <fullName evidence="1">Large ribosomal subunit protein bL9</fullName>
    </recommendedName>
    <alternativeName>
        <fullName evidence="2">50S ribosomal protein L9</fullName>
    </alternativeName>
</protein>
<name>RL9_SHIDS</name>
<reference key="1">
    <citation type="journal article" date="2005" name="Nucleic Acids Res.">
        <title>Genome dynamics and diversity of Shigella species, the etiologic agents of bacillary dysentery.</title>
        <authorList>
            <person name="Yang F."/>
            <person name="Yang J."/>
            <person name="Zhang X."/>
            <person name="Chen L."/>
            <person name="Jiang Y."/>
            <person name="Yan Y."/>
            <person name="Tang X."/>
            <person name="Wang J."/>
            <person name="Xiong Z."/>
            <person name="Dong J."/>
            <person name="Xue Y."/>
            <person name="Zhu Y."/>
            <person name="Xu X."/>
            <person name="Sun L."/>
            <person name="Chen S."/>
            <person name="Nie H."/>
            <person name="Peng J."/>
            <person name="Xu J."/>
            <person name="Wang Y."/>
            <person name="Yuan Z."/>
            <person name="Wen Y."/>
            <person name="Yao Z."/>
            <person name="Shen Y."/>
            <person name="Qiang B."/>
            <person name="Hou Y."/>
            <person name="Yu J."/>
            <person name="Jin Q."/>
        </authorList>
    </citation>
    <scope>NUCLEOTIDE SEQUENCE [LARGE SCALE GENOMIC DNA]</scope>
    <source>
        <strain>Sd197</strain>
    </source>
</reference>
<dbReference type="EMBL" id="CP000034">
    <property type="protein sequence ID" value="ABB64259.1"/>
    <property type="molecule type" value="Genomic_DNA"/>
</dbReference>
<dbReference type="RefSeq" id="WP_001196060.1">
    <property type="nucleotide sequence ID" value="NC_007606.1"/>
</dbReference>
<dbReference type="RefSeq" id="YP_405750.1">
    <property type="nucleotide sequence ID" value="NC_007606.1"/>
</dbReference>
<dbReference type="PDB" id="7NBU">
    <property type="method" value="EM"/>
    <property type="resolution" value="3.11 A"/>
    <property type="chains" value="h=1-41"/>
</dbReference>
<dbReference type="PDBsum" id="7NBU"/>
<dbReference type="EMDB" id="EMD-12261"/>
<dbReference type="SMR" id="Q328J6"/>
<dbReference type="STRING" id="300267.SDY_4372"/>
<dbReference type="EnsemblBacteria" id="ABB64259">
    <property type="protein sequence ID" value="ABB64259"/>
    <property type="gene ID" value="SDY_4372"/>
</dbReference>
<dbReference type="KEGG" id="sdy:SDY_4372"/>
<dbReference type="PATRIC" id="fig|300267.13.peg.5161"/>
<dbReference type="HOGENOM" id="CLU_078938_4_1_6"/>
<dbReference type="Proteomes" id="UP000002716">
    <property type="component" value="Chromosome"/>
</dbReference>
<dbReference type="GO" id="GO:1990904">
    <property type="term" value="C:ribonucleoprotein complex"/>
    <property type="evidence" value="ECO:0007669"/>
    <property type="project" value="UniProtKB-KW"/>
</dbReference>
<dbReference type="GO" id="GO:0005840">
    <property type="term" value="C:ribosome"/>
    <property type="evidence" value="ECO:0007669"/>
    <property type="project" value="UniProtKB-KW"/>
</dbReference>
<dbReference type="GO" id="GO:0019843">
    <property type="term" value="F:rRNA binding"/>
    <property type="evidence" value="ECO:0007669"/>
    <property type="project" value="UniProtKB-UniRule"/>
</dbReference>
<dbReference type="GO" id="GO:0003735">
    <property type="term" value="F:structural constituent of ribosome"/>
    <property type="evidence" value="ECO:0007669"/>
    <property type="project" value="InterPro"/>
</dbReference>
<dbReference type="GO" id="GO:0006412">
    <property type="term" value="P:translation"/>
    <property type="evidence" value="ECO:0007669"/>
    <property type="project" value="UniProtKB-UniRule"/>
</dbReference>
<dbReference type="FunFam" id="3.10.430.100:FF:000001">
    <property type="entry name" value="50S ribosomal protein L9"/>
    <property type="match status" value="1"/>
</dbReference>
<dbReference type="FunFam" id="3.40.5.10:FF:000001">
    <property type="entry name" value="50S ribosomal protein L9"/>
    <property type="match status" value="1"/>
</dbReference>
<dbReference type="Gene3D" id="3.10.430.100">
    <property type="entry name" value="Ribosomal protein L9, C-terminal domain"/>
    <property type="match status" value="1"/>
</dbReference>
<dbReference type="Gene3D" id="3.40.5.10">
    <property type="entry name" value="Ribosomal protein L9, N-terminal domain"/>
    <property type="match status" value="1"/>
</dbReference>
<dbReference type="HAMAP" id="MF_00503">
    <property type="entry name" value="Ribosomal_bL9"/>
    <property type="match status" value="1"/>
</dbReference>
<dbReference type="InterPro" id="IPR000244">
    <property type="entry name" value="Ribosomal_bL9"/>
</dbReference>
<dbReference type="InterPro" id="IPR009027">
    <property type="entry name" value="Ribosomal_bL9/RNase_H1_N"/>
</dbReference>
<dbReference type="InterPro" id="IPR020594">
    <property type="entry name" value="Ribosomal_bL9_bac/chp"/>
</dbReference>
<dbReference type="InterPro" id="IPR020069">
    <property type="entry name" value="Ribosomal_bL9_C"/>
</dbReference>
<dbReference type="InterPro" id="IPR036791">
    <property type="entry name" value="Ribosomal_bL9_C_sf"/>
</dbReference>
<dbReference type="InterPro" id="IPR020070">
    <property type="entry name" value="Ribosomal_bL9_N"/>
</dbReference>
<dbReference type="InterPro" id="IPR036935">
    <property type="entry name" value="Ribosomal_bL9_N_sf"/>
</dbReference>
<dbReference type="NCBIfam" id="TIGR00158">
    <property type="entry name" value="L9"/>
    <property type="match status" value="1"/>
</dbReference>
<dbReference type="PANTHER" id="PTHR21368">
    <property type="entry name" value="50S RIBOSOMAL PROTEIN L9"/>
    <property type="match status" value="1"/>
</dbReference>
<dbReference type="Pfam" id="PF03948">
    <property type="entry name" value="Ribosomal_L9_C"/>
    <property type="match status" value="1"/>
</dbReference>
<dbReference type="Pfam" id="PF01281">
    <property type="entry name" value="Ribosomal_L9_N"/>
    <property type="match status" value="1"/>
</dbReference>
<dbReference type="SUPFAM" id="SSF55658">
    <property type="entry name" value="L9 N-domain-like"/>
    <property type="match status" value="1"/>
</dbReference>
<dbReference type="SUPFAM" id="SSF55653">
    <property type="entry name" value="Ribosomal protein L9 C-domain"/>
    <property type="match status" value="1"/>
</dbReference>
<dbReference type="PROSITE" id="PS00651">
    <property type="entry name" value="RIBOSOMAL_L9"/>
    <property type="match status" value="1"/>
</dbReference>